<keyword id="KW-0963">Cytoplasm</keyword>
<keyword id="KW-0690">Ribosome biogenesis</keyword>
<accession>Q8DBV9</accession>
<name>RBFA_VIBVU</name>
<proteinExistence type="inferred from homology"/>
<comment type="function">
    <text evidence="1">One of several proteins that assist in the late maturation steps of the functional core of the 30S ribosomal subunit. Associates with free 30S ribosomal subunits (but not with 30S subunits that are part of 70S ribosomes or polysomes). Required for efficient processing of 16S rRNA. May interact with the 5'-terminal helix region of 16S rRNA.</text>
</comment>
<comment type="subunit">
    <text evidence="1">Monomer. Binds 30S ribosomal subunits, but not 50S ribosomal subunits or 70S ribosomes.</text>
</comment>
<comment type="subcellular location">
    <subcellularLocation>
        <location evidence="1">Cytoplasm</location>
    </subcellularLocation>
</comment>
<comment type="similarity">
    <text evidence="1">Belongs to the RbfA family.</text>
</comment>
<gene>
    <name evidence="1" type="primary">rbfA</name>
    <name type="ordered locus">VV1_1697</name>
</gene>
<protein>
    <recommendedName>
        <fullName evidence="1">Ribosome-binding factor A</fullName>
    </recommendedName>
</protein>
<reference key="1">
    <citation type="submission" date="2002-12" db="EMBL/GenBank/DDBJ databases">
        <title>Complete genome sequence of Vibrio vulnificus CMCP6.</title>
        <authorList>
            <person name="Rhee J.H."/>
            <person name="Kim S.Y."/>
            <person name="Chung S.S."/>
            <person name="Kim J.J."/>
            <person name="Moon Y.H."/>
            <person name="Jeong H."/>
            <person name="Choy H.E."/>
        </authorList>
    </citation>
    <scope>NUCLEOTIDE SEQUENCE [LARGE SCALE GENOMIC DNA]</scope>
    <source>
        <strain>CMCP6</strain>
    </source>
</reference>
<dbReference type="EMBL" id="AE016795">
    <property type="protein sequence ID" value="AAO10113.1"/>
    <property type="molecule type" value="Genomic_DNA"/>
</dbReference>
<dbReference type="RefSeq" id="WP_011079617.1">
    <property type="nucleotide sequence ID" value="NC_004459.3"/>
</dbReference>
<dbReference type="SMR" id="Q8DBV9"/>
<dbReference type="GeneID" id="93895950"/>
<dbReference type="KEGG" id="vvu:VV1_1697"/>
<dbReference type="HOGENOM" id="CLU_089475_5_0_6"/>
<dbReference type="Proteomes" id="UP000002275">
    <property type="component" value="Chromosome 1"/>
</dbReference>
<dbReference type="GO" id="GO:0005829">
    <property type="term" value="C:cytosol"/>
    <property type="evidence" value="ECO:0007669"/>
    <property type="project" value="TreeGrafter"/>
</dbReference>
<dbReference type="GO" id="GO:0043024">
    <property type="term" value="F:ribosomal small subunit binding"/>
    <property type="evidence" value="ECO:0007669"/>
    <property type="project" value="TreeGrafter"/>
</dbReference>
<dbReference type="GO" id="GO:0030490">
    <property type="term" value="P:maturation of SSU-rRNA"/>
    <property type="evidence" value="ECO:0007669"/>
    <property type="project" value="UniProtKB-UniRule"/>
</dbReference>
<dbReference type="FunFam" id="3.30.300.20:FF:000007">
    <property type="entry name" value="Ribosome-binding factor A"/>
    <property type="match status" value="1"/>
</dbReference>
<dbReference type="Gene3D" id="3.30.300.20">
    <property type="match status" value="1"/>
</dbReference>
<dbReference type="HAMAP" id="MF_00003">
    <property type="entry name" value="RbfA"/>
    <property type="match status" value="1"/>
</dbReference>
<dbReference type="InterPro" id="IPR015946">
    <property type="entry name" value="KH_dom-like_a/b"/>
</dbReference>
<dbReference type="InterPro" id="IPR000238">
    <property type="entry name" value="RbfA"/>
</dbReference>
<dbReference type="InterPro" id="IPR023799">
    <property type="entry name" value="RbfA_dom_sf"/>
</dbReference>
<dbReference type="InterPro" id="IPR020053">
    <property type="entry name" value="Ribosome-bd_factorA_CS"/>
</dbReference>
<dbReference type="NCBIfam" id="TIGR00082">
    <property type="entry name" value="rbfA"/>
    <property type="match status" value="1"/>
</dbReference>
<dbReference type="PANTHER" id="PTHR33515">
    <property type="entry name" value="RIBOSOME-BINDING FACTOR A, CHLOROPLASTIC-RELATED"/>
    <property type="match status" value="1"/>
</dbReference>
<dbReference type="PANTHER" id="PTHR33515:SF1">
    <property type="entry name" value="RIBOSOME-BINDING FACTOR A, CHLOROPLASTIC-RELATED"/>
    <property type="match status" value="1"/>
</dbReference>
<dbReference type="Pfam" id="PF02033">
    <property type="entry name" value="RBFA"/>
    <property type="match status" value="1"/>
</dbReference>
<dbReference type="SUPFAM" id="SSF89919">
    <property type="entry name" value="Ribosome-binding factor A, RbfA"/>
    <property type="match status" value="1"/>
</dbReference>
<dbReference type="PROSITE" id="PS01319">
    <property type="entry name" value="RBFA"/>
    <property type="match status" value="1"/>
</dbReference>
<organism>
    <name type="scientific">Vibrio vulnificus (strain CMCP6)</name>
    <dbReference type="NCBI Taxonomy" id="216895"/>
    <lineage>
        <taxon>Bacteria</taxon>
        <taxon>Pseudomonadati</taxon>
        <taxon>Pseudomonadota</taxon>
        <taxon>Gammaproteobacteria</taxon>
        <taxon>Vibrionales</taxon>
        <taxon>Vibrionaceae</taxon>
        <taxon>Vibrio</taxon>
    </lineage>
</organism>
<sequence length="131" mass="15281">MSKDFSRTQRVSQQLQKELAMILQREVRDSRLGMVTISDVEVSRDLAYAKVFVTFLCVGEQTPESCLAALREHEVHIRMMLGKRIRLRLTPEVRFYYDNTLVEGMRMSNLVTEVVNKDKIKQKDAGREDEE</sequence>
<feature type="chain" id="PRO_0000102768" description="Ribosome-binding factor A">
    <location>
        <begin position="1"/>
        <end position="131"/>
    </location>
</feature>
<evidence type="ECO:0000255" key="1">
    <source>
        <dbReference type="HAMAP-Rule" id="MF_00003"/>
    </source>
</evidence>